<organism>
    <name type="scientific">Drosophila melanogaster</name>
    <name type="common">Fruit fly</name>
    <dbReference type="NCBI Taxonomy" id="7227"/>
    <lineage>
        <taxon>Eukaryota</taxon>
        <taxon>Metazoa</taxon>
        <taxon>Ecdysozoa</taxon>
        <taxon>Arthropoda</taxon>
        <taxon>Hexapoda</taxon>
        <taxon>Insecta</taxon>
        <taxon>Pterygota</taxon>
        <taxon>Neoptera</taxon>
        <taxon>Endopterygota</taxon>
        <taxon>Diptera</taxon>
        <taxon>Brachycera</taxon>
        <taxon>Muscomorpha</taxon>
        <taxon>Ephydroidea</taxon>
        <taxon>Drosophilidae</taxon>
        <taxon>Drosophila</taxon>
        <taxon>Sophophora</taxon>
    </lineage>
</organism>
<sequence length="426" mass="47135">MTWGFVTCGPNEALVVSGCCYMKPLLVPGGRAFVWPVGQQVQRISLNTMTLQVESPCVYTSQGVPISVTGIAQVKVQGQNEDMLLTACEQFLGKSEAEINHIALVTLEGHQRAIMGSMTVEEIYKDRKKFSKQVFEVASSDLANMGITVVSYTIKDLRDEEGYLRSLGMARTAEVKRDARIGEAEARAEAHIKEAIAEEQRMAARFLNDTDIAKAQRDFELKKAAYDVEVQTKKAEAEMAYELQAAKTKQRIKEEQMQVKVIERTQEIAVQEQEIMRRERELEATIRRPAEAEKFRMEKLAEANKQRVVMEAEAEAESIRIRGEAEAFAIAAKAKAEAEQMAMKAEAYREYREAAMVEMLLDTLPKVAAEVAAPLSQAKKITMVSSGTGDIGAAKLTGEVLSIVNKVPELVKNITGVDIARSVHAG</sequence>
<gene>
    <name evidence="4" type="primary">Flo1</name>
    <name type="synonym">Flo</name>
    <name type="synonym">Flo-1</name>
    <name type="synonym">FLODM-1</name>
    <name evidence="4" type="ORF">CG8200</name>
</gene>
<evidence type="ECO:0000250" key="1"/>
<evidence type="ECO:0000269" key="2">
    <source>
    </source>
</evidence>
<evidence type="ECO:0000305" key="3"/>
<evidence type="ECO:0000312" key="4">
    <source>
        <dbReference type="FlyBase" id="FBgn0024754"/>
    </source>
</evidence>
<dbReference type="EMBL" id="AF044734">
    <property type="protein sequence ID" value="AAC39012.1"/>
    <property type="molecule type" value="mRNA"/>
</dbReference>
<dbReference type="EMBL" id="AE013599">
    <property type="protein sequence ID" value="AAF58120.1"/>
    <property type="molecule type" value="Genomic_DNA"/>
</dbReference>
<dbReference type="EMBL" id="AE013599">
    <property type="protein sequence ID" value="AAF58121.1"/>
    <property type="molecule type" value="Genomic_DNA"/>
</dbReference>
<dbReference type="EMBL" id="AY058794">
    <property type="protein sequence ID" value="AAL14023.1"/>
    <property type="molecule type" value="mRNA"/>
</dbReference>
<dbReference type="RefSeq" id="NP_477358.1">
    <molecule id="O61491-1"/>
    <property type="nucleotide sequence ID" value="NM_058010.4"/>
</dbReference>
<dbReference type="RefSeq" id="NP_725476.1">
    <molecule id="O61491-2"/>
    <property type="nucleotide sequence ID" value="NM_166102.2"/>
</dbReference>
<dbReference type="SMR" id="O61491"/>
<dbReference type="BioGRID" id="62460">
    <property type="interactions" value="10"/>
</dbReference>
<dbReference type="DIP" id="DIP-48829N"/>
<dbReference type="FunCoup" id="O61491">
    <property type="interactions" value="17"/>
</dbReference>
<dbReference type="IntAct" id="O61491">
    <property type="interactions" value="12"/>
</dbReference>
<dbReference type="STRING" id="7227.FBpp0086485"/>
<dbReference type="SwissPalm" id="O61491"/>
<dbReference type="PaxDb" id="7227-FBpp0086485"/>
<dbReference type="DNASU" id="36726"/>
<dbReference type="EnsemblMetazoa" id="FBtr0087351">
    <molecule id="O61491-1"/>
    <property type="protein sequence ID" value="FBpp0086484"/>
    <property type="gene ID" value="FBgn0024754"/>
</dbReference>
<dbReference type="EnsemblMetazoa" id="FBtr0087352">
    <molecule id="O61491-2"/>
    <property type="protein sequence ID" value="FBpp0086485"/>
    <property type="gene ID" value="FBgn0024754"/>
</dbReference>
<dbReference type="GeneID" id="36726"/>
<dbReference type="KEGG" id="dme:Dmel_CG8200"/>
<dbReference type="UCSC" id="CG8200-RA">
    <molecule id="O61491-1"/>
    <property type="organism name" value="d. melanogaster"/>
</dbReference>
<dbReference type="AGR" id="FB:FBgn0024754"/>
<dbReference type="CTD" id="36726"/>
<dbReference type="FlyBase" id="FBgn0024754">
    <property type="gene designation" value="Flo1"/>
</dbReference>
<dbReference type="VEuPathDB" id="VectorBase:FBgn0024754"/>
<dbReference type="eggNOG" id="KOG2668">
    <property type="taxonomic scope" value="Eukaryota"/>
</dbReference>
<dbReference type="GeneTree" id="ENSGT00560000077232"/>
<dbReference type="HOGENOM" id="CLU_038134_1_0_1"/>
<dbReference type="InParanoid" id="O61491"/>
<dbReference type="OMA" id="AFQIQDI"/>
<dbReference type="OrthoDB" id="6080404at2759"/>
<dbReference type="PhylomeDB" id="O61491"/>
<dbReference type="Reactome" id="R-DME-8849932">
    <property type="pathway name" value="Synaptic adhesion-like molecules"/>
</dbReference>
<dbReference type="Reactome" id="R-DME-8980692">
    <property type="pathway name" value="RHOA GTPase cycle"/>
</dbReference>
<dbReference type="Reactome" id="R-DME-9013026">
    <property type="pathway name" value="RHOB GTPase cycle"/>
</dbReference>
<dbReference type="SignaLink" id="O61491"/>
<dbReference type="BioGRID-ORCS" id="36726">
    <property type="hits" value="0 hits in 1 CRISPR screen"/>
</dbReference>
<dbReference type="ChiTaRS" id="Flo1">
    <property type="organism name" value="fly"/>
</dbReference>
<dbReference type="GenomeRNAi" id="36726"/>
<dbReference type="PRO" id="PR:O61491"/>
<dbReference type="Proteomes" id="UP000000803">
    <property type="component" value="Chromosome 2R"/>
</dbReference>
<dbReference type="Bgee" id="FBgn0024754">
    <property type="expression patterns" value="Expressed in T neuron T5a (Drosophila) in embryonic/larval optic lobe (Drosophila) and 213 other cell types or tissues"/>
</dbReference>
<dbReference type="GO" id="GO:0005737">
    <property type="term" value="C:cytoplasm"/>
    <property type="evidence" value="ECO:0007005"/>
    <property type="project" value="FlyBase"/>
</dbReference>
<dbReference type="GO" id="GO:0031410">
    <property type="term" value="C:cytoplasmic vesicle"/>
    <property type="evidence" value="ECO:0000318"/>
    <property type="project" value="GO_Central"/>
</dbReference>
<dbReference type="GO" id="GO:0016600">
    <property type="term" value="C:flotillin complex"/>
    <property type="evidence" value="ECO:0000318"/>
    <property type="project" value="GO_Central"/>
</dbReference>
<dbReference type="GO" id="GO:0005886">
    <property type="term" value="C:plasma membrane"/>
    <property type="evidence" value="ECO:0000318"/>
    <property type="project" value="GO_Central"/>
</dbReference>
<dbReference type="GO" id="GO:0002020">
    <property type="term" value="F:protease binding"/>
    <property type="evidence" value="ECO:0000318"/>
    <property type="project" value="GO_Central"/>
</dbReference>
<dbReference type="GO" id="GO:0005198">
    <property type="term" value="F:structural molecule activity"/>
    <property type="evidence" value="ECO:0000303"/>
    <property type="project" value="UniProtKB"/>
</dbReference>
<dbReference type="GO" id="GO:1901890">
    <property type="term" value="P:positive regulation of cell junction assembly"/>
    <property type="evidence" value="ECO:0000318"/>
    <property type="project" value="GO_Central"/>
</dbReference>
<dbReference type="GO" id="GO:2000049">
    <property type="term" value="P:positive regulation of cell-cell adhesion mediated by cadherin"/>
    <property type="evidence" value="ECO:0000318"/>
    <property type="project" value="GO_Central"/>
</dbReference>
<dbReference type="GO" id="GO:0045807">
    <property type="term" value="P:positive regulation of endocytosis"/>
    <property type="evidence" value="ECO:0000318"/>
    <property type="project" value="GO_Central"/>
</dbReference>
<dbReference type="GO" id="GO:0072659">
    <property type="term" value="P:protein localization to plasma membrane"/>
    <property type="evidence" value="ECO:0000318"/>
    <property type="project" value="GO_Central"/>
</dbReference>
<dbReference type="GO" id="GO:0002090">
    <property type="term" value="P:regulation of receptor internalization"/>
    <property type="evidence" value="ECO:0000318"/>
    <property type="project" value="GO_Central"/>
</dbReference>
<dbReference type="CDD" id="cd03399">
    <property type="entry name" value="SPFH_flotillin"/>
    <property type="match status" value="1"/>
</dbReference>
<dbReference type="FunFam" id="3.30.479.30:FF:000003">
    <property type="entry name" value="Flotillin 2"/>
    <property type="match status" value="1"/>
</dbReference>
<dbReference type="Gene3D" id="3.30.479.30">
    <property type="entry name" value="Band 7 domain"/>
    <property type="match status" value="1"/>
</dbReference>
<dbReference type="InterPro" id="IPR001107">
    <property type="entry name" value="Band_7"/>
</dbReference>
<dbReference type="InterPro" id="IPR036013">
    <property type="entry name" value="Band_7/SPFH_dom_sf"/>
</dbReference>
<dbReference type="InterPro" id="IPR031905">
    <property type="entry name" value="Flotillin_C"/>
</dbReference>
<dbReference type="InterPro" id="IPR027705">
    <property type="entry name" value="Flotillin_fam"/>
</dbReference>
<dbReference type="PANTHER" id="PTHR13806:SF46">
    <property type="entry name" value="FLOTILLIN-1-RELATED"/>
    <property type="match status" value="1"/>
</dbReference>
<dbReference type="PANTHER" id="PTHR13806">
    <property type="entry name" value="FLOTILLIN-RELATED"/>
    <property type="match status" value="1"/>
</dbReference>
<dbReference type="Pfam" id="PF01145">
    <property type="entry name" value="Band_7"/>
    <property type="match status" value="1"/>
</dbReference>
<dbReference type="Pfam" id="PF15975">
    <property type="entry name" value="Flot"/>
    <property type="match status" value="1"/>
</dbReference>
<dbReference type="SMART" id="SM00244">
    <property type="entry name" value="PHB"/>
    <property type="match status" value="1"/>
</dbReference>
<dbReference type="SUPFAM" id="SSF117892">
    <property type="entry name" value="Band 7/SPFH domain"/>
    <property type="match status" value="1"/>
</dbReference>
<accession>O61491</accession>
<accession>Q9V7D7</accession>
<proteinExistence type="evidence at transcript level"/>
<feature type="chain" id="PRO_0000094054" description="Flotillin-1">
    <location>
        <begin position="1"/>
        <end position="426"/>
    </location>
</feature>
<feature type="splice variant" id="VSP_000506" description="In isoform Long." evidence="3">
    <original>G</original>
    <variation>GDSKG</variation>
    <location>
        <position position="162"/>
    </location>
</feature>
<reference key="1">
    <citation type="journal article" date="1998" name="Gene">
        <title>Identification, sequence and developmental expression of invertebrate flotillins from Drosophila melanogaster.</title>
        <authorList>
            <person name="Galbiati F."/>
            <person name="Volonte D."/>
            <person name="Goltz J.S."/>
            <person name="Steele Z."/>
            <person name="Sen J."/>
            <person name="Jurcsak J."/>
            <person name="Stein D."/>
            <person name="Stevens L."/>
            <person name="Lisanti M.P."/>
        </authorList>
    </citation>
    <scope>NUCLEOTIDE SEQUENCE [MRNA] (ISOFORM SHORT)</scope>
    <scope>SUBCELLULAR LOCATION</scope>
    <scope>TISSUE SPECIFICITY</scope>
</reference>
<reference key="2">
    <citation type="journal article" date="2000" name="Science">
        <title>The genome sequence of Drosophila melanogaster.</title>
        <authorList>
            <person name="Adams M.D."/>
            <person name="Celniker S.E."/>
            <person name="Holt R.A."/>
            <person name="Evans C.A."/>
            <person name="Gocayne J.D."/>
            <person name="Amanatides P.G."/>
            <person name="Scherer S.E."/>
            <person name="Li P.W."/>
            <person name="Hoskins R.A."/>
            <person name="Galle R.F."/>
            <person name="George R.A."/>
            <person name="Lewis S.E."/>
            <person name="Richards S."/>
            <person name="Ashburner M."/>
            <person name="Henderson S.N."/>
            <person name="Sutton G.G."/>
            <person name="Wortman J.R."/>
            <person name="Yandell M.D."/>
            <person name="Zhang Q."/>
            <person name="Chen L.X."/>
            <person name="Brandon R.C."/>
            <person name="Rogers Y.-H.C."/>
            <person name="Blazej R.G."/>
            <person name="Champe M."/>
            <person name="Pfeiffer B.D."/>
            <person name="Wan K.H."/>
            <person name="Doyle C."/>
            <person name="Baxter E.G."/>
            <person name="Helt G."/>
            <person name="Nelson C.R."/>
            <person name="Miklos G.L.G."/>
            <person name="Abril J.F."/>
            <person name="Agbayani A."/>
            <person name="An H.-J."/>
            <person name="Andrews-Pfannkoch C."/>
            <person name="Baldwin D."/>
            <person name="Ballew R.M."/>
            <person name="Basu A."/>
            <person name="Baxendale J."/>
            <person name="Bayraktaroglu L."/>
            <person name="Beasley E.M."/>
            <person name="Beeson K.Y."/>
            <person name="Benos P.V."/>
            <person name="Berman B.P."/>
            <person name="Bhandari D."/>
            <person name="Bolshakov S."/>
            <person name="Borkova D."/>
            <person name="Botchan M.R."/>
            <person name="Bouck J."/>
            <person name="Brokstein P."/>
            <person name="Brottier P."/>
            <person name="Burtis K.C."/>
            <person name="Busam D.A."/>
            <person name="Butler H."/>
            <person name="Cadieu E."/>
            <person name="Center A."/>
            <person name="Chandra I."/>
            <person name="Cherry J.M."/>
            <person name="Cawley S."/>
            <person name="Dahlke C."/>
            <person name="Davenport L.B."/>
            <person name="Davies P."/>
            <person name="de Pablos B."/>
            <person name="Delcher A."/>
            <person name="Deng Z."/>
            <person name="Mays A.D."/>
            <person name="Dew I."/>
            <person name="Dietz S.M."/>
            <person name="Dodson K."/>
            <person name="Doup L.E."/>
            <person name="Downes M."/>
            <person name="Dugan-Rocha S."/>
            <person name="Dunkov B.C."/>
            <person name="Dunn P."/>
            <person name="Durbin K.J."/>
            <person name="Evangelista C.C."/>
            <person name="Ferraz C."/>
            <person name="Ferriera S."/>
            <person name="Fleischmann W."/>
            <person name="Fosler C."/>
            <person name="Gabrielian A.E."/>
            <person name="Garg N.S."/>
            <person name="Gelbart W.M."/>
            <person name="Glasser K."/>
            <person name="Glodek A."/>
            <person name="Gong F."/>
            <person name="Gorrell J.H."/>
            <person name="Gu Z."/>
            <person name="Guan P."/>
            <person name="Harris M."/>
            <person name="Harris N.L."/>
            <person name="Harvey D.A."/>
            <person name="Heiman T.J."/>
            <person name="Hernandez J.R."/>
            <person name="Houck J."/>
            <person name="Hostin D."/>
            <person name="Houston K.A."/>
            <person name="Howland T.J."/>
            <person name="Wei M.-H."/>
            <person name="Ibegwam C."/>
            <person name="Jalali M."/>
            <person name="Kalush F."/>
            <person name="Karpen G.H."/>
            <person name="Ke Z."/>
            <person name="Kennison J.A."/>
            <person name="Ketchum K.A."/>
            <person name="Kimmel B.E."/>
            <person name="Kodira C.D."/>
            <person name="Kraft C.L."/>
            <person name="Kravitz S."/>
            <person name="Kulp D."/>
            <person name="Lai Z."/>
            <person name="Lasko P."/>
            <person name="Lei Y."/>
            <person name="Levitsky A.A."/>
            <person name="Li J.H."/>
            <person name="Li Z."/>
            <person name="Liang Y."/>
            <person name="Lin X."/>
            <person name="Liu X."/>
            <person name="Mattei B."/>
            <person name="McIntosh T.C."/>
            <person name="McLeod M.P."/>
            <person name="McPherson D."/>
            <person name="Merkulov G."/>
            <person name="Milshina N.V."/>
            <person name="Mobarry C."/>
            <person name="Morris J."/>
            <person name="Moshrefi A."/>
            <person name="Mount S.M."/>
            <person name="Moy M."/>
            <person name="Murphy B."/>
            <person name="Murphy L."/>
            <person name="Muzny D.M."/>
            <person name="Nelson D.L."/>
            <person name="Nelson D.R."/>
            <person name="Nelson K.A."/>
            <person name="Nixon K."/>
            <person name="Nusskern D.R."/>
            <person name="Pacleb J.M."/>
            <person name="Palazzolo M."/>
            <person name="Pittman G.S."/>
            <person name="Pan S."/>
            <person name="Pollard J."/>
            <person name="Puri V."/>
            <person name="Reese M.G."/>
            <person name="Reinert K."/>
            <person name="Remington K."/>
            <person name="Saunders R.D.C."/>
            <person name="Scheeler F."/>
            <person name="Shen H."/>
            <person name="Shue B.C."/>
            <person name="Siden-Kiamos I."/>
            <person name="Simpson M."/>
            <person name="Skupski M.P."/>
            <person name="Smith T.J."/>
            <person name="Spier E."/>
            <person name="Spradling A.C."/>
            <person name="Stapleton M."/>
            <person name="Strong R."/>
            <person name="Sun E."/>
            <person name="Svirskas R."/>
            <person name="Tector C."/>
            <person name="Turner R."/>
            <person name="Venter E."/>
            <person name="Wang A.H."/>
            <person name="Wang X."/>
            <person name="Wang Z.-Y."/>
            <person name="Wassarman D.A."/>
            <person name="Weinstock G.M."/>
            <person name="Weissenbach J."/>
            <person name="Williams S.M."/>
            <person name="Woodage T."/>
            <person name="Worley K.C."/>
            <person name="Wu D."/>
            <person name="Yang S."/>
            <person name="Yao Q.A."/>
            <person name="Ye J."/>
            <person name="Yeh R.-F."/>
            <person name="Zaveri J.S."/>
            <person name="Zhan M."/>
            <person name="Zhang G."/>
            <person name="Zhao Q."/>
            <person name="Zheng L."/>
            <person name="Zheng X.H."/>
            <person name="Zhong F.N."/>
            <person name="Zhong W."/>
            <person name="Zhou X."/>
            <person name="Zhu S.C."/>
            <person name="Zhu X."/>
            <person name="Smith H.O."/>
            <person name="Gibbs R.A."/>
            <person name="Myers E.W."/>
            <person name="Rubin G.M."/>
            <person name="Venter J.C."/>
        </authorList>
    </citation>
    <scope>NUCLEOTIDE SEQUENCE [LARGE SCALE GENOMIC DNA]</scope>
    <source>
        <strain>Berkeley</strain>
    </source>
</reference>
<reference key="3">
    <citation type="journal article" date="2002" name="Genome Biol.">
        <title>Annotation of the Drosophila melanogaster euchromatic genome: a systematic review.</title>
        <authorList>
            <person name="Misra S."/>
            <person name="Crosby M.A."/>
            <person name="Mungall C.J."/>
            <person name="Matthews B.B."/>
            <person name="Campbell K.S."/>
            <person name="Hradecky P."/>
            <person name="Huang Y."/>
            <person name="Kaminker J.S."/>
            <person name="Millburn G.H."/>
            <person name="Prochnik S.E."/>
            <person name="Smith C.D."/>
            <person name="Tupy J.L."/>
            <person name="Whitfield E.J."/>
            <person name="Bayraktaroglu L."/>
            <person name="Berman B.P."/>
            <person name="Bettencourt B.R."/>
            <person name="Celniker S.E."/>
            <person name="de Grey A.D.N.J."/>
            <person name="Drysdale R.A."/>
            <person name="Harris N.L."/>
            <person name="Richter J."/>
            <person name="Russo S."/>
            <person name="Schroeder A.J."/>
            <person name="Shu S.Q."/>
            <person name="Stapleton M."/>
            <person name="Yamada C."/>
            <person name="Ashburner M."/>
            <person name="Gelbart W.M."/>
            <person name="Rubin G.M."/>
            <person name="Lewis S.E."/>
        </authorList>
    </citation>
    <scope>GENOME REANNOTATION</scope>
    <scope>ALTERNATIVE SPLICING</scope>
    <source>
        <strain>Berkeley</strain>
    </source>
</reference>
<reference key="4">
    <citation type="journal article" date="2002" name="Genome Biol.">
        <title>A Drosophila full-length cDNA resource.</title>
        <authorList>
            <person name="Stapleton M."/>
            <person name="Carlson J.W."/>
            <person name="Brokstein P."/>
            <person name="Yu C."/>
            <person name="Champe M."/>
            <person name="George R.A."/>
            <person name="Guarin H."/>
            <person name="Kronmiller B."/>
            <person name="Pacleb J.M."/>
            <person name="Park S."/>
            <person name="Wan K.H."/>
            <person name="Rubin G.M."/>
            <person name="Celniker S.E."/>
        </authorList>
    </citation>
    <scope>NUCLEOTIDE SEQUENCE [LARGE SCALE MRNA] (ISOFORM SHORT)</scope>
    <source>
        <strain>Berkeley</strain>
        <tissue>Embryo</tissue>
    </source>
</reference>
<comment type="function">
    <text evidence="1">May act as a scaffolding protein within caveolar membranes, functionally participating in formation of caveolae or caveolae-like vesicles.</text>
</comment>
<comment type="subunit">
    <text evidence="1">Heterooligomeric complex of flotillins 1 and 2 and caveolins 1 and 2.</text>
</comment>
<comment type="subcellular location">
    <subcellularLocation>
        <location evidence="2">Cell membrane</location>
        <topology evidence="2">Peripheral membrane protein</topology>
    </subcellularLocation>
    <subcellularLocation>
        <location evidence="2">Membrane</location>
        <location evidence="2">Caveola</location>
        <topology evidence="2">Peripheral membrane protein</topology>
    </subcellularLocation>
    <text>Membrane-associated protein of caveolae.</text>
</comment>
<comment type="alternative products">
    <event type="alternative splicing"/>
    <isoform>
        <id>O61491-1</id>
        <name>Short</name>
        <sequence type="displayed"/>
    </isoform>
    <isoform>
        <id>O61491-2</id>
        <name>Long</name>
        <sequence type="described" ref="VSP_000506"/>
    </isoform>
</comment>
<comment type="tissue specificity">
    <text evidence="2">Expressed in brain and ventral nerve cord from stage 12-16 of embryogenesis.</text>
</comment>
<comment type="similarity">
    <text evidence="3">Belongs to the band 7/mec-2 family. Flotillin subfamily.</text>
</comment>
<protein>
    <recommendedName>
        <fullName>Flotillin-1</fullName>
    </recommendedName>
</protein>
<name>FLOT1_DROME</name>
<keyword id="KW-0025">Alternative splicing</keyword>
<keyword id="KW-1003">Cell membrane</keyword>
<keyword id="KW-0217">Developmental protein</keyword>
<keyword id="KW-0472">Membrane</keyword>
<keyword id="KW-1185">Reference proteome</keyword>